<keyword id="KW-0963">Cytoplasm</keyword>
<keyword id="KW-0488">Methylation</keyword>
<keyword id="KW-0648">Protein biosynthesis</keyword>
<proteinExistence type="inferred from homology"/>
<accession>C3KDC6</accession>
<dbReference type="EMBL" id="AM181176">
    <property type="protein sequence ID" value="CAY47006.1"/>
    <property type="molecule type" value="Genomic_DNA"/>
</dbReference>
<dbReference type="RefSeq" id="WP_012722110.1">
    <property type="nucleotide sequence ID" value="NC_012660.1"/>
</dbReference>
<dbReference type="SMR" id="C3KDC6"/>
<dbReference type="STRING" id="294.SRM1_04799"/>
<dbReference type="GeneID" id="93462354"/>
<dbReference type="eggNOG" id="COG0216">
    <property type="taxonomic scope" value="Bacteria"/>
</dbReference>
<dbReference type="HOGENOM" id="CLU_036856_0_1_6"/>
<dbReference type="OrthoDB" id="9806673at2"/>
<dbReference type="GO" id="GO:0005737">
    <property type="term" value="C:cytoplasm"/>
    <property type="evidence" value="ECO:0007669"/>
    <property type="project" value="UniProtKB-SubCell"/>
</dbReference>
<dbReference type="GO" id="GO:0016149">
    <property type="term" value="F:translation release factor activity, codon specific"/>
    <property type="evidence" value="ECO:0007669"/>
    <property type="project" value="UniProtKB-UniRule"/>
</dbReference>
<dbReference type="FunFam" id="3.30.160.20:FF:000004">
    <property type="entry name" value="Peptide chain release factor 1"/>
    <property type="match status" value="1"/>
</dbReference>
<dbReference type="FunFam" id="3.30.70.1660:FF:000002">
    <property type="entry name" value="Peptide chain release factor 1"/>
    <property type="match status" value="1"/>
</dbReference>
<dbReference type="FunFam" id="3.30.70.1660:FF:000004">
    <property type="entry name" value="Peptide chain release factor 1"/>
    <property type="match status" value="1"/>
</dbReference>
<dbReference type="Gene3D" id="3.30.160.20">
    <property type="match status" value="1"/>
</dbReference>
<dbReference type="Gene3D" id="3.30.70.1660">
    <property type="match status" value="1"/>
</dbReference>
<dbReference type="Gene3D" id="6.10.140.1950">
    <property type="match status" value="1"/>
</dbReference>
<dbReference type="HAMAP" id="MF_00093">
    <property type="entry name" value="Rel_fac_1"/>
    <property type="match status" value="1"/>
</dbReference>
<dbReference type="InterPro" id="IPR005139">
    <property type="entry name" value="PCRF"/>
</dbReference>
<dbReference type="InterPro" id="IPR000352">
    <property type="entry name" value="Pep_chain_release_fac_I"/>
</dbReference>
<dbReference type="InterPro" id="IPR045853">
    <property type="entry name" value="Pep_chain_release_fac_I_sf"/>
</dbReference>
<dbReference type="InterPro" id="IPR050057">
    <property type="entry name" value="Prokaryotic/Mito_RF"/>
</dbReference>
<dbReference type="InterPro" id="IPR004373">
    <property type="entry name" value="RF-1"/>
</dbReference>
<dbReference type="NCBIfam" id="TIGR00019">
    <property type="entry name" value="prfA"/>
    <property type="match status" value="1"/>
</dbReference>
<dbReference type="NCBIfam" id="NF001859">
    <property type="entry name" value="PRK00591.1"/>
    <property type="match status" value="1"/>
</dbReference>
<dbReference type="PANTHER" id="PTHR43804">
    <property type="entry name" value="LD18447P"/>
    <property type="match status" value="1"/>
</dbReference>
<dbReference type="PANTHER" id="PTHR43804:SF7">
    <property type="entry name" value="LD18447P"/>
    <property type="match status" value="1"/>
</dbReference>
<dbReference type="Pfam" id="PF03462">
    <property type="entry name" value="PCRF"/>
    <property type="match status" value="1"/>
</dbReference>
<dbReference type="Pfam" id="PF00472">
    <property type="entry name" value="RF-1"/>
    <property type="match status" value="1"/>
</dbReference>
<dbReference type="SMART" id="SM00937">
    <property type="entry name" value="PCRF"/>
    <property type="match status" value="1"/>
</dbReference>
<dbReference type="SUPFAM" id="SSF75620">
    <property type="entry name" value="Release factor"/>
    <property type="match status" value="1"/>
</dbReference>
<dbReference type="PROSITE" id="PS00745">
    <property type="entry name" value="RF_PROK_I"/>
    <property type="match status" value="1"/>
</dbReference>
<name>RF1_PSEFS</name>
<protein>
    <recommendedName>
        <fullName evidence="1">Peptide chain release factor 1</fullName>
        <shortName evidence="1">RF-1</shortName>
    </recommendedName>
</protein>
<reference key="1">
    <citation type="journal article" date="2009" name="Genome Biol.">
        <title>Genomic and genetic analyses of diversity and plant interactions of Pseudomonas fluorescens.</title>
        <authorList>
            <person name="Silby M.W."/>
            <person name="Cerdeno-Tarraga A.M."/>
            <person name="Vernikos G.S."/>
            <person name="Giddens S.R."/>
            <person name="Jackson R.W."/>
            <person name="Preston G.M."/>
            <person name="Zhang X.-X."/>
            <person name="Moon C.D."/>
            <person name="Gehrig S.M."/>
            <person name="Godfrey S.A.C."/>
            <person name="Knight C.G."/>
            <person name="Malone J.G."/>
            <person name="Robinson Z."/>
            <person name="Spiers A.J."/>
            <person name="Harris S."/>
            <person name="Challis G.L."/>
            <person name="Yaxley A.M."/>
            <person name="Harris D."/>
            <person name="Seeger K."/>
            <person name="Murphy L."/>
            <person name="Rutter S."/>
            <person name="Squares R."/>
            <person name="Quail M.A."/>
            <person name="Saunders E."/>
            <person name="Mavromatis K."/>
            <person name="Brettin T.S."/>
            <person name="Bentley S.D."/>
            <person name="Hothersall J."/>
            <person name="Stephens E."/>
            <person name="Thomas C.M."/>
            <person name="Parkhill J."/>
            <person name="Levy S.B."/>
            <person name="Rainey P.B."/>
            <person name="Thomson N.R."/>
        </authorList>
    </citation>
    <scope>NUCLEOTIDE SEQUENCE [LARGE SCALE GENOMIC DNA]</scope>
    <source>
        <strain>SBW25</strain>
    </source>
</reference>
<evidence type="ECO:0000255" key="1">
    <source>
        <dbReference type="HAMAP-Rule" id="MF_00093"/>
    </source>
</evidence>
<comment type="function">
    <text evidence="1">Peptide chain release factor 1 directs the termination of translation in response to the peptide chain termination codons UAG and UAA.</text>
</comment>
<comment type="subcellular location">
    <subcellularLocation>
        <location evidence="1">Cytoplasm</location>
    </subcellularLocation>
</comment>
<comment type="PTM">
    <text evidence="1">Methylated by PrmC. Methylation increases the termination efficiency of RF1.</text>
</comment>
<comment type="similarity">
    <text evidence="1">Belongs to the prokaryotic/mitochondrial release factor family.</text>
</comment>
<gene>
    <name evidence="1" type="primary">prfA</name>
    <name type="ordered locus">PFLU_0738</name>
</gene>
<feature type="chain" id="PRO_1000202700" description="Peptide chain release factor 1">
    <location>
        <begin position="1"/>
        <end position="360"/>
    </location>
</feature>
<feature type="modified residue" description="N5-methylglutamine" evidence="1">
    <location>
        <position position="237"/>
    </location>
</feature>
<organism>
    <name type="scientific">Pseudomonas fluorescens (strain SBW25)</name>
    <dbReference type="NCBI Taxonomy" id="216595"/>
    <lineage>
        <taxon>Bacteria</taxon>
        <taxon>Pseudomonadati</taxon>
        <taxon>Pseudomonadota</taxon>
        <taxon>Gammaproteobacteria</taxon>
        <taxon>Pseudomonadales</taxon>
        <taxon>Pseudomonadaceae</taxon>
        <taxon>Pseudomonas</taxon>
    </lineage>
</organism>
<sequence length="360" mass="39882">MKASLLNKLDVLQDRFEELTALLGDGEVISDQAKFRAYSKEYAEVEPIVATYKHLTKVQADLEGAQALLKDSDPDMREMAVEEVREAKEKLAELEGDLQRMLLPKDPNDGRNVFLEIRAGTGGDEAAIFSGDLFRMYSRYAERRGWRVEILSENEGEHGGYKEVIARVEGDNVYGKLKFESGAHRVQRVPATESQGRIHTSACTVAVLPEPDEQEAIEINPADLRVDTYRSSGAGGQHVNKTDSAIRITHLPSGIVVECQEERSQHKNRARAMSWLSAKLNDQQTSAAANAIASERKLLVGSGDRSERIRTYNFAQGRVTDHRVNLTLYSLDEILAGGVDAVIEPLLAEYQADQLAAIGE</sequence>